<gene>
    <name evidence="1" type="primary">apt</name>
    <name type="ordered locus">Rmet_0311</name>
</gene>
<sequence length="190" mass="20740">MSNSIIQSPDLGDVTGYLRDRIRTVPDWPQPGVMFRDITPLLQNPKTLRVLIDVFVHRYMDQNLDLVAGIDARGFILGSIIAYELNLGFVPIRKKGKLPFQTVAEEYELEYGSATVEIHADACKPGDRVLLIDDLIATGGTMMAGRKLLERLGATVVEGGAIVDLPELGGSKLLQASGLSLFTVCNFDGH</sequence>
<dbReference type="EC" id="2.4.2.7" evidence="1"/>
<dbReference type="EMBL" id="CP000352">
    <property type="protein sequence ID" value="ABF07197.1"/>
    <property type="molecule type" value="Genomic_DNA"/>
</dbReference>
<dbReference type="RefSeq" id="WP_011515197.1">
    <property type="nucleotide sequence ID" value="NC_007973.1"/>
</dbReference>
<dbReference type="SMR" id="Q1LRM9"/>
<dbReference type="STRING" id="266264.Rmet_0311"/>
<dbReference type="KEGG" id="rme:Rmet_0311"/>
<dbReference type="eggNOG" id="COG0503">
    <property type="taxonomic scope" value="Bacteria"/>
</dbReference>
<dbReference type="HOGENOM" id="CLU_063339_3_0_4"/>
<dbReference type="UniPathway" id="UPA00588">
    <property type="reaction ID" value="UER00646"/>
</dbReference>
<dbReference type="Proteomes" id="UP000002429">
    <property type="component" value="Chromosome"/>
</dbReference>
<dbReference type="GO" id="GO:0005737">
    <property type="term" value="C:cytoplasm"/>
    <property type="evidence" value="ECO:0007669"/>
    <property type="project" value="UniProtKB-SubCell"/>
</dbReference>
<dbReference type="GO" id="GO:0003999">
    <property type="term" value="F:adenine phosphoribosyltransferase activity"/>
    <property type="evidence" value="ECO:0007669"/>
    <property type="project" value="UniProtKB-UniRule"/>
</dbReference>
<dbReference type="GO" id="GO:0006168">
    <property type="term" value="P:adenine salvage"/>
    <property type="evidence" value="ECO:0007669"/>
    <property type="project" value="InterPro"/>
</dbReference>
<dbReference type="GO" id="GO:0044209">
    <property type="term" value="P:AMP salvage"/>
    <property type="evidence" value="ECO:0007669"/>
    <property type="project" value="UniProtKB-UniRule"/>
</dbReference>
<dbReference type="GO" id="GO:0006166">
    <property type="term" value="P:purine ribonucleoside salvage"/>
    <property type="evidence" value="ECO:0007669"/>
    <property type="project" value="UniProtKB-KW"/>
</dbReference>
<dbReference type="CDD" id="cd06223">
    <property type="entry name" value="PRTases_typeI"/>
    <property type="match status" value="1"/>
</dbReference>
<dbReference type="FunFam" id="3.40.50.2020:FF:000021">
    <property type="entry name" value="Adenine phosphoribosyltransferase"/>
    <property type="match status" value="1"/>
</dbReference>
<dbReference type="Gene3D" id="3.40.50.2020">
    <property type="match status" value="1"/>
</dbReference>
<dbReference type="HAMAP" id="MF_00004">
    <property type="entry name" value="Aden_phosphoribosyltr"/>
    <property type="match status" value="1"/>
</dbReference>
<dbReference type="InterPro" id="IPR005764">
    <property type="entry name" value="Ade_phspho_trans"/>
</dbReference>
<dbReference type="InterPro" id="IPR050120">
    <property type="entry name" value="Adenine_PRTase"/>
</dbReference>
<dbReference type="InterPro" id="IPR000836">
    <property type="entry name" value="PRibTrfase_dom"/>
</dbReference>
<dbReference type="InterPro" id="IPR029057">
    <property type="entry name" value="PRTase-like"/>
</dbReference>
<dbReference type="NCBIfam" id="TIGR01090">
    <property type="entry name" value="apt"/>
    <property type="match status" value="1"/>
</dbReference>
<dbReference type="NCBIfam" id="NF002634">
    <property type="entry name" value="PRK02304.1-3"/>
    <property type="match status" value="1"/>
</dbReference>
<dbReference type="NCBIfam" id="NF002636">
    <property type="entry name" value="PRK02304.1-5"/>
    <property type="match status" value="1"/>
</dbReference>
<dbReference type="PANTHER" id="PTHR11776">
    <property type="entry name" value="ADENINE PHOSPHORIBOSYLTRANSFERASE"/>
    <property type="match status" value="1"/>
</dbReference>
<dbReference type="PANTHER" id="PTHR11776:SF7">
    <property type="entry name" value="PHOSPHORIBOSYLTRANSFERASE DOMAIN-CONTAINING PROTEIN"/>
    <property type="match status" value="1"/>
</dbReference>
<dbReference type="Pfam" id="PF00156">
    <property type="entry name" value="Pribosyltran"/>
    <property type="match status" value="1"/>
</dbReference>
<dbReference type="SUPFAM" id="SSF53271">
    <property type="entry name" value="PRTase-like"/>
    <property type="match status" value="1"/>
</dbReference>
<dbReference type="PROSITE" id="PS00103">
    <property type="entry name" value="PUR_PYR_PR_TRANSFER"/>
    <property type="match status" value="1"/>
</dbReference>
<organism>
    <name type="scientific">Cupriavidus metallidurans (strain ATCC 43123 / DSM 2839 / NBRC 102507 / CH34)</name>
    <name type="common">Ralstonia metallidurans</name>
    <dbReference type="NCBI Taxonomy" id="266264"/>
    <lineage>
        <taxon>Bacteria</taxon>
        <taxon>Pseudomonadati</taxon>
        <taxon>Pseudomonadota</taxon>
        <taxon>Betaproteobacteria</taxon>
        <taxon>Burkholderiales</taxon>
        <taxon>Burkholderiaceae</taxon>
        <taxon>Cupriavidus</taxon>
    </lineage>
</organism>
<name>APT_CUPMC</name>
<protein>
    <recommendedName>
        <fullName evidence="1">Adenine phosphoribosyltransferase</fullName>
        <shortName evidence="1">APRT</shortName>
        <ecNumber evidence="1">2.4.2.7</ecNumber>
    </recommendedName>
</protein>
<accession>Q1LRM9</accession>
<evidence type="ECO:0000255" key="1">
    <source>
        <dbReference type="HAMAP-Rule" id="MF_00004"/>
    </source>
</evidence>
<reference key="1">
    <citation type="journal article" date="2010" name="PLoS ONE">
        <title>The complete genome sequence of Cupriavidus metallidurans strain CH34, a master survivalist in harsh and anthropogenic environments.</title>
        <authorList>
            <person name="Janssen P.J."/>
            <person name="Van Houdt R."/>
            <person name="Moors H."/>
            <person name="Monsieurs P."/>
            <person name="Morin N."/>
            <person name="Michaux A."/>
            <person name="Benotmane M.A."/>
            <person name="Leys N."/>
            <person name="Vallaeys T."/>
            <person name="Lapidus A."/>
            <person name="Monchy S."/>
            <person name="Medigue C."/>
            <person name="Taghavi S."/>
            <person name="McCorkle S."/>
            <person name="Dunn J."/>
            <person name="van der Lelie D."/>
            <person name="Mergeay M."/>
        </authorList>
    </citation>
    <scope>NUCLEOTIDE SEQUENCE [LARGE SCALE GENOMIC DNA]</scope>
    <source>
        <strain>ATCC 43123 / DSM 2839 / NBRC 102507 / CH34</strain>
    </source>
</reference>
<proteinExistence type="inferred from homology"/>
<feature type="chain" id="PRO_0000321390" description="Adenine phosphoribosyltransferase">
    <location>
        <begin position="1"/>
        <end position="190"/>
    </location>
</feature>
<keyword id="KW-0963">Cytoplasm</keyword>
<keyword id="KW-0328">Glycosyltransferase</keyword>
<keyword id="KW-0660">Purine salvage</keyword>
<keyword id="KW-1185">Reference proteome</keyword>
<keyword id="KW-0808">Transferase</keyword>
<comment type="function">
    <text evidence="1">Catalyzes a salvage reaction resulting in the formation of AMP, that is energically less costly than de novo synthesis.</text>
</comment>
<comment type="catalytic activity">
    <reaction evidence="1">
        <text>AMP + diphosphate = 5-phospho-alpha-D-ribose 1-diphosphate + adenine</text>
        <dbReference type="Rhea" id="RHEA:16609"/>
        <dbReference type="ChEBI" id="CHEBI:16708"/>
        <dbReference type="ChEBI" id="CHEBI:33019"/>
        <dbReference type="ChEBI" id="CHEBI:58017"/>
        <dbReference type="ChEBI" id="CHEBI:456215"/>
        <dbReference type="EC" id="2.4.2.7"/>
    </reaction>
</comment>
<comment type="pathway">
    <text evidence="1">Purine metabolism; AMP biosynthesis via salvage pathway; AMP from adenine: step 1/1.</text>
</comment>
<comment type="subunit">
    <text evidence="1">Homodimer.</text>
</comment>
<comment type="subcellular location">
    <subcellularLocation>
        <location evidence="1">Cytoplasm</location>
    </subcellularLocation>
</comment>
<comment type="similarity">
    <text evidence="1">Belongs to the purine/pyrimidine phosphoribosyltransferase family.</text>
</comment>